<gene>
    <name evidence="1" type="primary">rpsB</name>
    <name type="ordered locus">AZC_1693</name>
</gene>
<name>RS2_AZOC5</name>
<sequence length="333" mass="36274">MALPDYSMRQLLEAGVHFGHQSHRWNPKMSQYIFGVRNNIHIIDLSQTVPALHRALQAVSDTVAQGGRVLFVGTKRQAQDQVADAARRSAQYYVNSRWLGGMLTNWKTISNSIARLKKLEEMLSGPEQGGYTKKERLTLSREKEKLERALGGIRDMGGLPDLLFVIDTNKEDIAVKEAQRLGIPVAAILDTNSDPDGITYPVPGNDDAGRAIQLYCDLVARAAIDGIGRGHVDLGVDLGETEAPLSEGLPAEPSLWSTFEPLSGPRGVADDLKKLTGVSPEIEQKLNDLGVFHFSQIAGLDSVDAQRVGEEVGLPGRVDGWIAQAKEFSAEAE</sequence>
<proteinExistence type="inferred from homology"/>
<evidence type="ECO:0000255" key="1">
    <source>
        <dbReference type="HAMAP-Rule" id="MF_00291"/>
    </source>
</evidence>
<evidence type="ECO:0000305" key="2"/>
<protein>
    <recommendedName>
        <fullName evidence="1">Small ribosomal subunit protein uS2</fullName>
    </recommendedName>
    <alternativeName>
        <fullName evidence="2">30S ribosomal protein S2</fullName>
    </alternativeName>
</protein>
<keyword id="KW-1185">Reference proteome</keyword>
<keyword id="KW-0687">Ribonucleoprotein</keyword>
<keyword id="KW-0689">Ribosomal protein</keyword>
<accession>A8I460</accession>
<reference key="1">
    <citation type="submission" date="2007-04" db="EMBL/GenBank/DDBJ databases">
        <title>Complete genome sequence of the nitrogen-fixing bacterium Azorhizobium caulinodans ORS571.</title>
        <authorList>
            <person name="Lee K.B."/>
            <person name="Backer P.D."/>
            <person name="Aono T."/>
            <person name="Liu C.T."/>
            <person name="Suzuki S."/>
            <person name="Suzuki T."/>
            <person name="Kaneko T."/>
            <person name="Yamada M."/>
            <person name="Tabata S."/>
            <person name="Kupfer D.M."/>
            <person name="Najar F.Z."/>
            <person name="Wiley G.B."/>
            <person name="Roe B."/>
            <person name="Binnewies T."/>
            <person name="Ussery D."/>
            <person name="Vereecke D."/>
            <person name="Gevers D."/>
            <person name="Holsters M."/>
            <person name="Oyaizu H."/>
        </authorList>
    </citation>
    <scope>NUCLEOTIDE SEQUENCE [LARGE SCALE GENOMIC DNA]</scope>
    <source>
        <strain>ATCC 43989 / DSM 5975 / JCM 20966 / LMG 6465 / NBRC 14845 / NCIMB 13405 / ORS 571</strain>
    </source>
</reference>
<dbReference type="EMBL" id="AP009384">
    <property type="protein sequence ID" value="BAF87691.1"/>
    <property type="molecule type" value="Genomic_DNA"/>
</dbReference>
<dbReference type="RefSeq" id="WP_012170221.1">
    <property type="nucleotide sequence ID" value="NC_009937.1"/>
</dbReference>
<dbReference type="SMR" id="A8I460"/>
<dbReference type="STRING" id="438753.AZC_1693"/>
<dbReference type="KEGG" id="azc:AZC_1693"/>
<dbReference type="eggNOG" id="COG0052">
    <property type="taxonomic scope" value="Bacteria"/>
</dbReference>
<dbReference type="HOGENOM" id="CLU_040318_2_1_5"/>
<dbReference type="Proteomes" id="UP000000270">
    <property type="component" value="Chromosome"/>
</dbReference>
<dbReference type="GO" id="GO:0022627">
    <property type="term" value="C:cytosolic small ribosomal subunit"/>
    <property type="evidence" value="ECO:0007669"/>
    <property type="project" value="TreeGrafter"/>
</dbReference>
<dbReference type="GO" id="GO:0003735">
    <property type="term" value="F:structural constituent of ribosome"/>
    <property type="evidence" value="ECO:0007669"/>
    <property type="project" value="InterPro"/>
</dbReference>
<dbReference type="GO" id="GO:0006412">
    <property type="term" value="P:translation"/>
    <property type="evidence" value="ECO:0007669"/>
    <property type="project" value="UniProtKB-UniRule"/>
</dbReference>
<dbReference type="CDD" id="cd01425">
    <property type="entry name" value="RPS2"/>
    <property type="match status" value="1"/>
</dbReference>
<dbReference type="FunFam" id="1.10.287.610:FF:000001">
    <property type="entry name" value="30S ribosomal protein S2"/>
    <property type="match status" value="1"/>
</dbReference>
<dbReference type="Gene3D" id="3.40.50.10490">
    <property type="entry name" value="Glucose-6-phosphate isomerase like protein, domain 1"/>
    <property type="match status" value="1"/>
</dbReference>
<dbReference type="Gene3D" id="1.10.287.610">
    <property type="entry name" value="Helix hairpin bin"/>
    <property type="match status" value="1"/>
</dbReference>
<dbReference type="HAMAP" id="MF_00291_B">
    <property type="entry name" value="Ribosomal_uS2_B"/>
    <property type="match status" value="1"/>
</dbReference>
<dbReference type="InterPro" id="IPR001865">
    <property type="entry name" value="Ribosomal_uS2"/>
</dbReference>
<dbReference type="InterPro" id="IPR005706">
    <property type="entry name" value="Ribosomal_uS2_bac/mit/plastid"/>
</dbReference>
<dbReference type="InterPro" id="IPR018130">
    <property type="entry name" value="Ribosomal_uS2_CS"/>
</dbReference>
<dbReference type="InterPro" id="IPR023591">
    <property type="entry name" value="Ribosomal_uS2_flav_dom_sf"/>
</dbReference>
<dbReference type="NCBIfam" id="NF008966">
    <property type="entry name" value="PRK12311.1"/>
    <property type="match status" value="1"/>
</dbReference>
<dbReference type="NCBIfam" id="TIGR01011">
    <property type="entry name" value="rpsB_bact"/>
    <property type="match status" value="1"/>
</dbReference>
<dbReference type="PANTHER" id="PTHR12534">
    <property type="entry name" value="30S RIBOSOMAL PROTEIN S2 PROKARYOTIC AND ORGANELLAR"/>
    <property type="match status" value="1"/>
</dbReference>
<dbReference type="PANTHER" id="PTHR12534:SF0">
    <property type="entry name" value="SMALL RIBOSOMAL SUBUNIT PROTEIN US2M"/>
    <property type="match status" value="1"/>
</dbReference>
<dbReference type="Pfam" id="PF00318">
    <property type="entry name" value="Ribosomal_S2"/>
    <property type="match status" value="1"/>
</dbReference>
<dbReference type="PRINTS" id="PR00395">
    <property type="entry name" value="RIBOSOMALS2"/>
</dbReference>
<dbReference type="SUPFAM" id="SSF52313">
    <property type="entry name" value="Ribosomal protein S2"/>
    <property type="match status" value="1"/>
</dbReference>
<dbReference type="PROSITE" id="PS00962">
    <property type="entry name" value="RIBOSOMAL_S2_1"/>
    <property type="match status" value="1"/>
</dbReference>
<dbReference type="PROSITE" id="PS00963">
    <property type="entry name" value="RIBOSOMAL_S2_2"/>
    <property type="match status" value="1"/>
</dbReference>
<feature type="chain" id="PRO_1000071944" description="Small ribosomal subunit protein uS2">
    <location>
        <begin position="1"/>
        <end position="333"/>
    </location>
</feature>
<comment type="similarity">
    <text evidence="1">Belongs to the universal ribosomal protein uS2 family.</text>
</comment>
<organism>
    <name type="scientific">Azorhizobium caulinodans (strain ATCC 43989 / DSM 5975 / JCM 20966 / LMG 6465 / NBRC 14845 / NCIMB 13405 / ORS 571)</name>
    <dbReference type="NCBI Taxonomy" id="438753"/>
    <lineage>
        <taxon>Bacteria</taxon>
        <taxon>Pseudomonadati</taxon>
        <taxon>Pseudomonadota</taxon>
        <taxon>Alphaproteobacteria</taxon>
        <taxon>Hyphomicrobiales</taxon>
        <taxon>Xanthobacteraceae</taxon>
        <taxon>Azorhizobium</taxon>
    </lineage>
</organism>